<name>IF1_RICTY</name>
<feature type="chain" id="PRO_0000095856" description="Translation initiation factor IF-1">
    <location>
        <begin position="1"/>
        <end position="71"/>
    </location>
</feature>
<feature type="domain" description="S1-like" evidence="1">
    <location>
        <begin position="1"/>
        <end position="71"/>
    </location>
</feature>
<evidence type="ECO:0000255" key="1">
    <source>
        <dbReference type="HAMAP-Rule" id="MF_00075"/>
    </source>
</evidence>
<reference key="1">
    <citation type="journal article" date="2004" name="J. Bacteriol.">
        <title>Complete genome sequence of Rickettsia typhi and comparison with sequences of other Rickettsiae.</title>
        <authorList>
            <person name="McLeod M.P."/>
            <person name="Qin X."/>
            <person name="Karpathy S.E."/>
            <person name="Gioia J."/>
            <person name="Highlander S.K."/>
            <person name="Fox G.E."/>
            <person name="McNeill T.Z."/>
            <person name="Jiang H."/>
            <person name="Muzny D."/>
            <person name="Jacob L.S."/>
            <person name="Hawes A.C."/>
            <person name="Sodergren E."/>
            <person name="Gill R."/>
            <person name="Hume J."/>
            <person name="Morgan M."/>
            <person name="Fan G."/>
            <person name="Amin A.G."/>
            <person name="Gibbs R.A."/>
            <person name="Hong C."/>
            <person name="Yu X.-J."/>
            <person name="Walker D.H."/>
            <person name="Weinstock G.M."/>
        </authorList>
    </citation>
    <scope>NUCLEOTIDE SEQUENCE [LARGE SCALE GENOMIC DNA]</scope>
    <source>
        <strain>ATCC VR-144 / Wilmington</strain>
    </source>
</reference>
<protein>
    <recommendedName>
        <fullName evidence="1">Translation initiation factor IF-1</fullName>
    </recommendedName>
</protein>
<comment type="function">
    <text evidence="1">One of the essential components for the initiation of protein synthesis. Stabilizes the binding of IF-2 and IF-3 on the 30S subunit to which N-formylmethionyl-tRNA(fMet) subsequently binds. Helps modulate mRNA selection, yielding the 30S pre-initiation complex (PIC). Upon addition of the 50S ribosomal subunit IF-1, IF-2 and IF-3 are released leaving the mature 70S translation initiation complex.</text>
</comment>
<comment type="subunit">
    <text evidence="1">Component of the 30S ribosomal translation pre-initiation complex which assembles on the 30S ribosome in the order IF-2 and IF-3, IF-1 and N-formylmethionyl-tRNA(fMet); mRNA recruitment can occur at any time during PIC assembly.</text>
</comment>
<comment type="subcellular location">
    <subcellularLocation>
        <location evidence="1">Cytoplasm</location>
    </subcellularLocation>
</comment>
<comment type="similarity">
    <text evidence="1">Belongs to the IF-1 family.</text>
</comment>
<dbReference type="EMBL" id="AE017197">
    <property type="protein sequence ID" value="AAU04257.1"/>
    <property type="molecule type" value="Genomic_DNA"/>
</dbReference>
<dbReference type="RefSeq" id="WP_008579354.1">
    <property type="nucleotide sequence ID" value="NC_006142.1"/>
</dbReference>
<dbReference type="SMR" id="Q68VT5"/>
<dbReference type="KEGG" id="rty:RT0802"/>
<dbReference type="eggNOG" id="COG0361">
    <property type="taxonomic scope" value="Bacteria"/>
</dbReference>
<dbReference type="HOGENOM" id="CLU_151267_1_0_5"/>
<dbReference type="OrthoDB" id="9803250at2"/>
<dbReference type="Proteomes" id="UP000000604">
    <property type="component" value="Chromosome"/>
</dbReference>
<dbReference type="GO" id="GO:0005829">
    <property type="term" value="C:cytosol"/>
    <property type="evidence" value="ECO:0007669"/>
    <property type="project" value="TreeGrafter"/>
</dbReference>
<dbReference type="GO" id="GO:0043022">
    <property type="term" value="F:ribosome binding"/>
    <property type="evidence" value="ECO:0007669"/>
    <property type="project" value="UniProtKB-UniRule"/>
</dbReference>
<dbReference type="GO" id="GO:0019843">
    <property type="term" value="F:rRNA binding"/>
    <property type="evidence" value="ECO:0007669"/>
    <property type="project" value="UniProtKB-UniRule"/>
</dbReference>
<dbReference type="GO" id="GO:0003743">
    <property type="term" value="F:translation initiation factor activity"/>
    <property type="evidence" value="ECO:0007669"/>
    <property type="project" value="UniProtKB-UniRule"/>
</dbReference>
<dbReference type="CDD" id="cd04451">
    <property type="entry name" value="S1_IF1"/>
    <property type="match status" value="1"/>
</dbReference>
<dbReference type="FunFam" id="2.40.50.140:FF:000002">
    <property type="entry name" value="Translation initiation factor IF-1"/>
    <property type="match status" value="1"/>
</dbReference>
<dbReference type="Gene3D" id="2.40.50.140">
    <property type="entry name" value="Nucleic acid-binding proteins"/>
    <property type="match status" value="1"/>
</dbReference>
<dbReference type="HAMAP" id="MF_00075">
    <property type="entry name" value="IF_1"/>
    <property type="match status" value="1"/>
</dbReference>
<dbReference type="InterPro" id="IPR012340">
    <property type="entry name" value="NA-bd_OB-fold"/>
</dbReference>
<dbReference type="InterPro" id="IPR006196">
    <property type="entry name" value="RNA-binding_domain_S1_IF1"/>
</dbReference>
<dbReference type="InterPro" id="IPR004368">
    <property type="entry name" value="TIF_IF1"/>
</dbReference>
<dbReference type="NCBIfam" id="TIGR00008">
    <property type="entry name" value="infA"/>
    <property type="match status" value="1"/>
</dbReference>
<dbReference type="PANTHER" id="PTHR33370">
    <property type="entry name" value="TRANSLATION INITIATION FACTOR IF-1, CHLOROPLASTIC"/>
    <property type="match status" value="1"/>
</dbReference>
<dbReference type="PANTHER" id="PTHR33370:SF1">
    <property type="entry name" value="TRANSLATION INITIATION FACTOR IF-1, CHLOROPLASTIC"/>
    <property type="match status" value="1"/>
</dbReference>
<dbReference type="Pfam" id="PF01176">
    <property type="entry name" value="eIF-1a"/>
    <property type="match status" value="1"/>
</dbReference>
<dbReference type="SUPFAM" id="SSF50249">
    <property type="entry name" value="Nucleic acid-binding proteins"/>
    <property type="match status" value="1"/>
</dbReference>
<dbReference type="PROSITE" id="PS50832">
    <property type="entry name" value="S1_IF1_TYPE"/>
    <property type="match status" value="1"/>
</dbReference>
<proteinExistence type="inferred from homology"/>
<gene>
    <name evidence="1" type="primary">infA</name>
    <name type="ordered locus">RT0802</name>
</gene>
<accession>Q68VT5</accession>
<organism>
    <name type="scientific">Rickettsia typhi (strain ATCC VR-144 / Wilmington)</name>
    <dbReference type="NCBI Taxonomy" id="257363"/>
    <lineage>
        <taxon>Bacteria</taxon>
        <taxon>Pseudomonadati</taxon>
        <taxon>Pseudomonadota</taxon>
        <taxon>Alphaproteobacteria</taxon>
        <taxon>Rickettsiales</taxon>
        <taxon>Rickettsiaceae</taxon>
        <taxon>Rickettsieae</taxon>
        <taxon>Rickettsia</taxon>
        <taxon>typhus group</taxon>
    </lineage>
</organism>
<keyword id="KW-0963">Cytoplasm</keyword>
<keyword id="KW-0396">Initiation factor</keyword>
<keyword id="KW-0648">Protein biosynthesis</keyword>
<keyword id="KW-0694">RNA-binding</keyword>
<keyword id="KW-0699">rRNA-binding</keyword>
<sequence length="71" mass="8211">MSKDDLIQFTGTVLELLPNATFRVKLENDHVIIAHTSGRMRKNRIRILLGDKVTVEMTPYDLTKGRVIHRH</sequence>